<evidence type="ECO:0000255" key="1">
    <source>
        <dbReference type="HAMAP-Rule" id="MF_00041"/>
    </source>
</evidence>
<sequence>MELRLYDTLSREKRTFTPLDPSNVRMYVCGPTVYDFAHIGNARPVIVFDVLFRLLRHVYGEAHVKYVRNITDVDDKINDRAARDFPGLPLNEAIRKVTEQTEKQFHDDVDALGCLRPTVEPRATEHIGEMRDIIDRLIAGGFAYVAADHVLFSPQAMNAKDGVLPRYGALANRSLDEMIAGARVDVAPYKRDATDFVLWKPSKPGEPSWPSPGGIAVQGRPGWHIECSAMSWKHLGERFDIHGGGIDLVFPHHENEVAQSCCAFHTERMAETWMHNGFLQVEGEKMSKSLGNFVTIRELLATDKFGGKRWDGAVLRLAMLKTHYRSPIDWTVEALHEAEKAIYDWSEFTKDATPAPCDEVIDALADDLNTPKMIAELHGLRRVGKPAELLGALQLLGIGRVFRQTIEIDVNAQALIEARTAARARKDFKESDRIRDELAAMGVVLKDGKDADGKPVTTWEIAR</sequence>
<protein>
    <recommendedName>
        <fullName evidence="1">Cysteine--tRNA ligase</fullName>
        <ecNumber evidence="1">6.1.1.16</ecNumber>
    </recommendedName>
    <alternativeName>
        <fullName evidence="1">Cysteinyl-tRNA synthetase</fullName>
        <shortName evidence="1">CysRS</shortName>
    </alternativeName>
</protein>
<dbReference type="EC" id="6.1.1.16" evidence="1"/>
<dbReference type="EMBL" id="CP000463">
    <property type="protein sequence ID" value="ABJ05942.1"/>
    <property type="molecule type" value="Genomic_DNA"/>
</dbReference>
<dbReference type="SMR" id="Q07Q42"/>
<dbReference type="STRING" id="316055.RPE_1998"/>
<dbReference type="KEGG" id="rpe:RPE_1998"/>
<dbReference type="eggNOG" id="COG0215">
    <property type="taxonomic scope" value="Bacteria"/>
</dbReference>
<dbReference type="HOGENOM" id="CLU_013528_0_1_5"/>
<dbReference type="OrthoDB" id="9815130at2"/>
<dbReference type="GO" id="GO:0005829">
    <property type="term" value="C:cytosol"/>
    <property type="evidence" value="ECO:0007669"/>
    <property type="project" value="TreeGrafter"/>
</dbReference>
<dbReference type="GO" id="GO:0005524">
    <property type="term" value="F:ATP binding"/>
    <property type="evidence" value="ECO:0007669"/>
    <property type="project" value="UniProtKB-UniRule"/>
</dbReference>
<dbReference type="GO" id="GO:0004817">
    <property type="term" value="F:cysteine-tRNA ligase activity"/>
    <property type="evidence" value="ECO:0007669"/>
    <property type="project" value="UniProtKB-UniRule"/>
</dbReference>
<dbReference type="GO" id="GO:0008270">
    <property type="term" value="F:zinc ion binding"/>
    <property type="evidence" value="ECO:0007669"/>
    <property type="project" value="UniProtKB-UniRule"/>
</dbReference>
<dbReference type="GO" id="GO:0006423">
    <property type="term" value="P:cysteinyl-tRNA aminoacylation"/>
    <property type="evidence" value="ECO:0007669"/>
    <property type="project" value="UniProtKB-UniRule"/>
</dbReference>
<dbReference type="CDD" id="cd00672">
    <property type="entry name" value="CysRS_core"/>
    <property type="match status" value="1"/>
</dbReference>
<dbReference type="FunFam" id="3.40.50.620:FF:000068">
    <property type="entry name" value="Cysteine--tRNA ligase"/>
    <property type="match status" value="1"/>
</dbReference>
<dbReference type="Gene3D" id="3.40.50.620">
    <property type="entry name" value="HUPs"/>
    <property type="match status" value="1"/>
</dbReference>
<dbReference type="HAMAP" id="MF_00041">
    <property type="entry name" value="Cys_tRNA_synth"/>
    <property type="match status" value="1"/>
</dbReference>
<dbReference type="InterPro" id="IPR015803">
    <property type="entry name" value="Cys-tRNA-ligase"/>
</dbReference>
<dbReference type="InterPro" id="IPR024909">
    <property type="entry name" value="Cys-tRNA/MSH_ligase"/>
</dbReference>
<dbReference type="InterPro" id="IPR056411">
    <property type="entry name" value="CysS_C"/>
</dbReference>
<dbReference type="InterPro" id="IPR014729">
    <property type="entry name" value="Rossmann-like_a/b/a_fold"/>
</dbReference>
<dbReference type="InterPro" id="IPR032678">
    <property type="entry name" value="tRNA-synt_1_cat_dom"/>
</dbReference>
<dbReference type="InterPro" id="IPR009080">
    <property type="entry name" value="tRNAsynth_Ia_anticodon-bd"/>
</dbReference>
<dbReference type="NCBIfam" id="TIGR00435">
    <property type="entry name" value="cysS"/>
    <property type="match status" value="1"/>
</dbReference>
<dbReference type="PANTHER" id="PTHR10890:SF3">
    <property type="entry name" value="CYSTEINE--TRNA LIGASE, CYTOPLASMIC"/>
    <property type="match status" value="1"/>
</dbReference>
<dbReference type="PANTHER" id="PTHR10890">
    <property type="entry name" value="CYSTEINYL-TRNA SYNTHETASE"/>
    <property type="match status" value="1"/>
</dbReference>
<dbReference type="Pfam" id="PF23493">
    <property type="entry name" value="CysS_C"/>
    <property type="match status" value="1"/>
</dbReference>
<dbReference type="Pfam" id="PF01406">
    <property type="entry name" value="tRNA-synt_1e"/>
    <property type="match status" value="1"/>
</dbReference>
<dbReference type="PRINTS" id="PR00983">
    <property type="entry name" value="TRNASYNTHCYS"/>
</dbReference>
<dbReference type="SUPFAM" id="SSF47323">
    <property type="entry name" value="Anticodon-binding domain of a subclass of class I aminoacyl-tRNA synthetases"/>
    <property type="match status" value="1"/>
</dbReference>
<dbReference type="SUPFAM" id="SSF52374">
    <property type="entry name" value="Nucleotidylyl transferase"/>
    <property type="match status" value="1"/>
</dbReference>
<keyword id="KW-0030">Aminoacyl-tRNA synthetase</keyword>
<keyword id="KW-0067">ATP-binding</keyword>
<keyword id="KW-0963">Cytoplasm</keyword>
<keyword id="KW-0436">Ligase</keyword>
<keyword id="KW-0479">Metal-binding</keyword>
<keyword id="KW-0547">Nucleotide-binding</keyword>
<keyword id="KW-0648">Protein biosynthesis</keyword>
<keyword id="KW-0862">Zinc</keyword>
<gene>
    <name evidence="1" type="primary">cysS</name>
    <name type="ordered locus">RPE_1998</name>
</gene>
<feature type="chain" id="PRO_1000006603" description="Cysteine--tRNA ligase">
    <location>
        <begin position="1"/>
        <end position="463"/>
    </location>
</feature>
<feature type="short sequence motif" description="'HIGH' region">
    <location>
        <begin position="31"/>
        <end position="41"/>
    </location>
</feature>
<feature type="short sequence motif" description="'KMSKS' region">
    <location>
        <begin position="285"/>
        <end position="289"/>
    </location>
</feature>
<feature type="binding site" evidence="1">
    <location>
        <position position="29"/>
    </location>
    <ligand>
        <name>Zn(2+)</name>
        <dbReference type="ChEBI" id="CHEBI:29105"/>
    </ligand>
</feature>
<feature type="binding site" evidence="1">
    <location>
        <position position="227"/>
    </location>
    <ligand>
        <name>Zn(2+)</name>
        <dbReference type="ChEBI" id="CHEBI:29105"/>
    </ligand>
</feature>
<feature type="binding site" evidence="1">
    <location>
        <position position="252"/>
    </location>
    <ligand>
        <name>Zn(2+)</name>
        <dbReference type="ChEBI" id="CHEBI:29105"/>
    </ligand>
</feature>
<feature type="binding site" evidence="1">
    <location>
        <position position="256"/>
    </location>
    <ligand>
        <name>Zn(2+)</name>
        <dbReference type="ChEBI" id="CHEBI:29105"/>
    </ligand>
</feature>
<feature type="binding site" evidence="1">
    <location>
        <position position="288"/>
    </location>
    <ligand>
        <name>ATP</name>
        <dbReference type="ChEBI" id="CHEBI:30616"/>
    </ligand>
</feature>
<proteinExistence type="inferred from homology"/>
<name>SYC_RHOP5</name>
<organism>
    <name type="scientific">Rhodopseudomonas palustris (strain BisA53)</name>
    <dbReference type="NCBI Taxonomy" id="316055"/>
    <lineage>
        <taxon>Bacteria</taxon>
        <taxon>Pseudomonadati</taxon>
        <taxon>Pseudomonadota</taxon>
        <taxon>Alphaproteobacteria</taxon>
        <taxon>Hyphomicrobiales</taxon>
        <taxon>Nitrobacteraceae</taxon>
        <taxon>Rhodopseudomonas</taxon>
    </lineage>
</organism>
<accession>Q07Q42</accession>
<comment type="catalytic activity">
    <reaction evidence="1">
        <text>tRNA(Cys) + L-cysteine + ATP = L-cysteinyl-tRNA(Cys) + AMP + diphosphate</text>
        <dbReference type="Rhea" id="RHEA:17773"/>
        <dbReference type="Rhea" id="RHEA-COMP:9661"/>
        <dbReference type="Rhea" id="RHEA-COMP:9679"/>
        <dbReference type="ChEBI" id="CHEBI:30616"/>
        <dbReference type="ChEBI" id="CHEBI:33019"/>
        <dbReference type="ChEBI" id="CHEBI:35235"/>
        <dbReference type="ChEBI" id="CHEBI:78442"/>
        <dbReference type="ChEBI" id="CHEBI:78517"/>
        <dbReference type="ChEBI" id="CHEBI:456215"/>
        <dbReference type="EC" id="6.1.1.16"/>
    </reaction>
</comment>
<comment type="cofactor">
    <cofactor evidence="1">
        <name>Zn(2+)</name>
        <dbReference type="ChEBI" id="CHEBI:29105"/>
    </cofactor>
    <text evidence="1">Binds 1 zinc ion per subunit.</text>
</comment>
<comment type="subunit">
    <text evidence="1">Monomer.</text>
</comment>
<comment type="subcellular location">
    <subcellularLocation>
        <location evidence="1">Cytoplasm</location>
    </subcellularLocation>
</comment>
<comment type="similarity">
    <text evidence="1">Belongs to the class-I aminoacyl-tRNA synthetase family.</text>
</comment>
<reference key="1">
    <citation type="submission" date="2006-09" db="EMBL/GenBank/DDBJ databases">
        <title>Complete sequence of Rhodopseudomonas palustris BisA53.</title>
        <authorList>
            <consortium name="US DOE Joint Genome Institute"/>
            <person name="Copeland A."/>
            <person name="Lucas S."/>
            <person name="Lapidus A."/>
            <person name="Barry K."/>
            <person name="Detter J.C."/>
            <person name="Glavina del Rio T."/>
            <person name="Hammon N."/>
            <person name="Israni S."/>
            <person name="Dalin E."/>
            <person name="Tice H."/>
            <person name="Pitluck S."/>
            <person name="Chain P."/>
            <person name="Malfatti S."/>
            <person name="Shin M."/>
            <person name="Vergez L."/>
            <person name="Schmutz J."/>
            <person name="Larimer F."/>
            <person name="Land M."/>
            <person name="Hauser L."/>
            <person name="Pelletier D.A."/>
            <person name="Kyrpides N."/>
            <person name="Kim E."/>
            <person name="Harwood C.S."/>
            <person name="Oda Y."/>
            <person name="Richardson P."/>
        </authorList>
    </citation>
    <scope>NUCLEOTIDE SEQUENCE [LARGE SCALE GENOMIC DNA]</scope>
    <source>
        <strain>BisA53</strain>
    </source>
</reference>